<comment type="function">
    <text evidence="1">Usually encoded in the trnK tRNA gene intron. Probably assists in splicing its own and other chloroplast group II introns.</text>
</comment>
<comment type="subcellular location">
    <subcellularLocation>
        <location>Plastid</location>
        <location>Chloroplast</location>
    </subcellularLocation>
</comment>
<comment type="similarity">
    <text evidence="1">Belongs to the intron maturase 2 family. MatK subfamily.</text>
</comment>
<evidence type="ECO:0000255" key="1">
    <source>
        <dbReference type="HAMAP-Rule" id="MF_01390"/>
    </source>
</evidence>
<accession>O47150</accession>
<keyword id="KW-0150">Chloroplast</keyword>
<keyword id="KW-0507">mRNA processing</keyword>
<keyword id="KW-0934">Plastid</keyword>
<keyword id="KW-0694">RNA-binding</keyword>
<keyword id="KW-0819">tRNA processing</keyword>
<proteinExistence type="inferred from homology"/>
<name>MATK_PHYEM</name>
<dbReference type="EMBL" id="U61333">
    <property type="protein sequence ID" value="AAB93740.1"/>
    <property type="molecule type" value="Genomic_DNA"/>
</dbReference>
<dbReference type="GO" id="GO:0009507">
    <property type="term" value="C:chloroplast"/>
    <property type="evidence" value="ECO:0007669"/>
    <property type="project" value="UniProtKB-SubCell"/>
</dbReference>
<dbReference type="GO" id="GO:0003723">
    <property type="term" value="F:RNA binding"/>
    <property type="evidence" value="ECO:0007669"/>
    <property type="project" value="UniProtKB-KW"/>
</dbReference>
<dbReference type="GO" id="GO:0006397">
    <property type="term" value="P:mRNA processing"/>
    <property type="evidence" value="ECO:0007669"/>
    <property type="project" value="UniProtKB-KW"/>
</dbReference>
<dbReference type="GO" id="GO:0008380">
    <property type="term" value="P:RNA splicing"/>
    <property type="evidence" value="ECO:0007669"/>
    <property type="project" value="UniProtKB-UniRule"/>
</dbReference>
<dbReference type="GO" id="GO:0008033">
    <property type="term" value="P:tRNA processing"/>
    <property type="evidence" value="ECO:0007669"/>
    <property type="project" value="UniProtKB-KW"/>
</dbReference>
<dbReference type="HAMAP" id="MF_01390">
    <property type="entry name" value="MatK"/>
    <property type="match status" value="1"/>
</dbReference>
<dbReference type="InterPro" id="IPR024937">
    <property type="entry name" value="Domain_X"/>
</dbReference>
<dbReference type="InterPro" id="IPR002866">
    <property type="entry name" value="Maturase_MatK"/>
</dbReference>
<dbReference type="InterPro" id="IPR024942">
    <property type="entry name" value="Maturase_MatK_N"/>
</dbReference>
<dbReference type="PANTHER" id="PTHR34811">
    <property type="entry name" value="MATURASE K"/>
    <property type="match status" value="1"/>
</dbReference>
<dbReference type="PANTHER" id="PTHR34811:SF1">
    <property type="entry name" value="MATURASE K"/>
    <property type="match status" value="1"/>
</dbReference>
<dbReference type="Pfam" id="PF01348">
    <property type="entry name" value="Intron_maturas2"/>
    <property type="match status" value="1"/>
</dbReference>
<dbReference type="Pfam" id="PF01824">
    <property type="entry name" value="MatK_N"/>
    <property type="match status" value="1"/>
</dbReference>
<gene>
    <name evidence="1" type="primary">matK</name>
</gene>
<sequence length="506" mass="60968">MAEFKRYLELDISQQHDFIYPLIFQEYIYALAHDRGLNRSIFLENAGYDNKSSLLIVKRLITHLITQMYQQNHFFFSVSDSNQKKNLGYNTNFYSQMIFEGFAVVMEIPFYLRLLSFLEGKERVKSHNLRSIHSIFPFLEDKFTYQNYVLDIQIPHPIHPEILVQTLRYWVKDASSLHLLRFFLHEYPIWNSLITQKKSIFYFSKKNQRFFLFLYNFHVCEYESIFVFLRNQSSYLRSISSETFLERISFYRKIEREVFTKDFKAILWLFKEPFLHYVRYRGKAILASKGTSLLMNKWKYYLLNFWQSYFYMWSQPRRIHINQLSNHSLDFLGYLSSVRLKPLMLRSQMIENSFLIENASKKFDTLMPITTMILSLYKAKFCNVVGHPMSKPAWAALSDSDIIERFRALYRNLSHYYSGSLKKISLYRIKYILRLSCARTLARKHKSTVRAFLKRLGVGLLEEFFTEEEQVFYLTFQKVSFTSGELYRRRIWYLDIICINDLANYE</sequence>
<geneLocation type="chloroplast"/>
<protein>
    <recommendedName>
        <fullName evidence="1">Maturase K</fullName>
    </recommendedName>
    <alternativeName>
        <fullName evidence="1">Intron maturase</fullName>
    </alternativeName>
</protein>
<reference key="1">
    <citation type="journal article" date="1997" name="Am. J. Bot.">
        <title>Phylogenetics relationships of Rhododendroideae (Ericaceae).</title>
        <authorList>
            <person name="Kron K.A."/>
        </authorList>
    </citation>
    <scope>NUCLEOTIDE SEQUENCE [GENOMIC DNA]</scope>
</reference>
<feature type="chain" id="PRO_0000143592" description="Maturase K">
    <location>
        <begin position="1"/>
        <end position="506"/>
    </location>
</feature>
<organism>
    <name type="scientific">Phyllodoce empetriformis</name>
    <name type="common">Pink mountainheath</name>
    <name type="synonym">Menziesia empetriformis</name>
    <dbReference type="NCBI Taxonomy" id="45910"/>
    <lineage>
        <taxon>Eukaryota</taxon>
        <taxon>Viridiplantae</taxon>
        <taxon>Streptophyta</taxon>
        <taxon>Embryophyta</taxon>
        <taxon>Tracheophyta</taxon>
        <taxon>Spermatophyta</taxon>
        <taxon>Magnoliopsida</taxon>
        <taxon>eudicotyledons</taxon>
        <taxon>Gunneridae</taxon>
        <taxon>Pentapetalae</taxon>
        <taxon>asterids</taxon>
        <taxon>Ericales</taxon>
        <taxon>Ericaceae</taxon>
        <taxon>Ericoideae</taxon>
        <taxon>Phyllodoceae</taxon>
        <taxon>Phyllodoce</taxon>
    </lineage>
</organism>